<dbReference type="EMBL" id="M86530">
    <property type="protein sequence ID" value="AAD15224.1"/>
    <property type="molecule type" value="Genomic_DNA"/>
</dbReference>
<dbReference type="EMBL" id="M34849">
    <property type="protein sequence ID" value="AAA98423.1"/>
    <property type="molecule type" value="Genomic_DNA"/>
</dbReference>
<dbReference type="EMBL" id="J04117">
    <property type="protein sequence ID" value="AAA26521.1"/>
    <property type="molecule type" value="Genomic_DNA"/>
</dbReference>
<dbReference type="EMBL" id="X15319">
    <property type="protein sequence ID" value="CAA33380.1"/>
    <property type="molecule type" value="Genomic_DNA"/>
</dbReference>
<dbReference type="EMBL" id="AL391753">
    <property type="protein sequence ID" value="CAC05804.1"/>
    <property type="molecule type" value="Genomic_DNA"/>
</dbReference>
<dbReference type="EMBL" id="AF348706">
    <property type="protein sequence ID" value="AAK18447.1"/>
    <property type="molecule type" value="Genomic_DNA"/>
</dbReference>
<dbReference type="EMBL" id="AY206439">
    <property type="protein sequence ID" value="AAP78992.1"/>
    <property type="molecule type" value="Genomic_DNA"/>
</dbReference>
<dbReference type="EMBL" id="AF386526">
    <property type="protein sequence ID" value="AAL72340.1"/>
    <property type="molecule type" value="Genomic_DNA"/>
</dbReference>
<dbReference type="PIR" id="C34965">
    <property type="entry name" value="C34965"/>
</dbReference>
<dbReference type="RefSeq" id="NP_085291.1">
    <property type="nucleotide sequence ID" value="NC_002698.1"/>
</dbReference>
<dbReference type="RefSeq" id="NP_858262.1">
    <property type="nucleotide sequence ID" value="NC_004851.1"/>
</dbReference>
<dbReference type="RefSeq" id="WP_000055835.1">
    <property type="nucleotide sequence ID" value="NZ_WPGS01000043.1"/>
</dbReference>
<dbReference type="RefSeq" id="YP_009062486.1">
    <property type="nucleotide sequence ID" value="NC_024996.1"/>
</dbReference>
<dbReference type="PDB" id="3GYZ">
    <property type="method" value="X-ray"/>
    <property type="resolution" value="2.15 A"/>
    <property type="chains" value="A/B=1-151"/>
</dbReference>
<dbReference type="PDB" id="3GZ1">
    <property type="method" value="X-ray"/>
    <property type="resolution" value="2.15 A"/>
    <property type="chains" value="A/B=1-151"/>
</dbReference>
<dbReference type="PDB" id="3GZ2">
    <property type="method" value="X-ray"/>
    <property type="resolution" value="2.65 A"/>
    <property type="chains" value="A/B=1-151"/>
</dbReference>
<dbReference type="PDB" id="3KS2">
    <property type="method" value="X-ray"/>
    <property type="resolution" value="3.30 A"/>
    <property type="chains" value="A/B/C/D/E/F/G/H/I/J/K/L/M/N/O/P/Q/R=10-155"/>
</dbReference>
<dbReference type="PDB" id="6SCB">
    <property type="method" value="X-ray"/>
    <property type="resolution" value="1.58 A"/>
    <property type="chains" value="A/B=10-151"/>
</dbReference>
<dbReference type="PDB" id="7AXY">
    <property type="method" value="X-ray"/>
    <property type="resolution" value="1.63 A"/>
    <property type="chains" value="A/B=10-151"/>
</dbReference>
<dbReference type="PDB" id="7AYW">
    <property type="method" value="X-ray"/>
    <property type="resolution" value="1.78 A"/>
    <property type="chains" value="A/B=10-151"/>
</dbReference>
<dbReference type="PDB" id="7AZV">
    <property type="method" value="X-ray"/>
    <property type="resolution" value="1.68 A"/>
    <property type="chains" value="A/B=10-151"/>
</dbReference>
<dbReference type="PDB" id="7B1U">
    <property type="method" value="X-ray"/>
    <property type="resolution" value="1.59 A"/>
    <property type="chains" value="A/B=10-151"/>
</dbReference>
<dbReference type="PDB" id="7NHW">
    <property type="method" value="X-ray"/>
    <property type="resolution" value="1.92 A"/>
    <property type="chains" value="A/B=10-151"/>
</dbReference>
<dbReference type="PDB" id="7NL8">
    <property type="method" value="X-ray"/>
    <property type="resolution" value="1.59 A"/>
    <property type="chains" value="A/B=10-151"/>
</dbReference>
<dbReference type="PDB" id="7NRG">
    <property type="method" value="X-ray"/>
    <property type="resolution" value="1.57 A"/>
    <property type="chains" value="A/B=10-151"/>
</dbReference>
<dbReference type="PDB" id="7O04">
    <property type="method" value="X-ray"/>
    <property type="resolution" value="1.74 A"/>
    <property type="chains" value="A/B=10-151"/>
</dbReference>
<dbReference type="PDB" id="7O6S">
    <property type="method" value="X-ray"/>
    <property type="resolution" value="1.58 A"/>
    <property type="chains" value="A/B=10-151"/>
</dbReference>
<dbReference type="PDB" id="7OWV">
    <property type="method" value="X-ray"/>
    <property type="resolution" value="1.59 A"/>
    <property type="chains" value="A/B=10-151"/>
</dbReference>
<dbReference type="PDB" id="7P42">
    <property type="method" value="X-ray"/>
    <property type="resolution" value="1.50 A"/>
    <property type="chains" value="A/B=10-151"/>
</dbReference>
<dbReference type="PDB" id="7PE0">
    <property type="method" value="X-ray"/>
    <property type="resolution" value="1.50 A"/>
    <property type="chains" value="A/B=10-151"/>
</dbReference>
<dbReference type="PDB" id="7PEF">
    <property type="method" value="X-ray"/>
    <property type="resolution" value="1.54 A"/>
    <property type="chains" value="A/B=10-151"/>
</dbReference>
<dbReference type="PDB" id="8QH6">
    <property type="method" value="X-ray"/>
    <property type="resolution" value="1.80 A"/>
    <property type="chains" value="A/B=10-151"/>
</dbReference>
<dbReference type="PDBsum" id="3GYZ"/>
<dbReference type="PDBsum" id="3GZ1"/>
<dbReference type="PDBsum" id="3GZ2"/>
<dbReference type="PDBsum" id="3KS2"/>
<dbReference type="PDBsum" id="6SCB"/>
<dbReference type="PDBsum" id="7AXY"/>
<dbReference type="PDBsum" id="7AYW"/>
<dbReference type="PDBsum" id="7AZV"/>
<dbReference type="PDBsum" id="7B1U"/>
<dbReference type="PDBsum" id="7NHW"/>
<dbReference type="PDBsum" id="7NL8"/>
<dbReference type="PDBsum" id="7NRG"/>
<dbReference type="PDBsum" id="7O04"/>
<dbReference type="PDBsum" id="7O6S"/>
<dbReference type="PDBsum" id="7OWV"/>
<dbReference type="PDBsum" id="7P42"/>
<dbReference type="PDBsum" id="7PE0"/>
<dbReference type="PDBsum" id="7PEF"/>
<dbReference type="PDBsum" id="8QH6"/>
<dbReference type="SASBDB" id="P0A2U4"/>
<dbReference type="SMR" id="P0A2U4"/>
<dbReference type="DIP" id="DIP-45500N"/>
<dbReference type="IntAct" id="P0A2U4">
    <property type="interactions" value="2"/>
</dbReference>
<dbReference type="PaxDb" id="198214-CP0129"/>
<dbReference type="GeneID" id="1238043"/>
<dbReference type="KEGG" id="sfl:CP0129"/>
<dbReference type="PATRIC" id="fig|198214.7.peg.5384"/>
<dbReference type="HOGENOM" id="CLU_093829_1_0_6"/>
<dbReference type="EvolutionaryTrace" id="P0A2U4"/>
<dbReference type="Proteomes" id="UP000001006">
    <property type="component" value="Plasmid pCP301"/>
</dbReference>
<dbReference type="GO" id="GO:0005737">
    <property type="term" value="C:cytoplasm"/>
    <property type="evidence" value="ECO:0007669"/>
    <property type="project" value="UniProtKB-SubCell"/>
</dbReference>
<dbReference type="GO" id="GO:0042802">
    <property type="term" value="F:identical protein binding"/>
    <property type="evidence" value="ECO:0000353"/>
    <property type="project" value="IntAct"/>
</dbReference>
<dbReference type="FunFam" id="1.25.40.10:FF:000100">
    <property type="entry name" value="Type III secretion system translocator chaperone SicA"/>
    <property type="match status" value="1"/>
</dbReference>
<dbReference type="Gene3D" id="1.25.40.10">
    <property type="entry name" value="Tetratricopeptide repeat domain"/>
    <property type="match status" value="1"/>
</dbReference>
<dbReference type="InterPro" id="IPR005415">
    <property type="entry name" value="T3SS_Ca_resp_chp_LcrH/SycD"/>
</dbReference>
<dbReference type="InterPro" id="IPR016379">
    <property type="entry name" value="T3SS_Ca_resp_chp_LcrH/SycD_sub"/>
</dbReference>
<dbReference type="InterPro" id="IPR011716">
    <property type="entry name" value="TPR-3"/>
</dbReference>
<dbReference type="InterPro" id="IPR011990">
    <property type="entry name" value="TPR-like_helical_dom_sf"/>
</dbReference>
<dbReference type="NCBIfam" id="TIGR02552">
    <property type="entry name" value="LcrH_SycD"/>
    <property type="match status" value="1"/>
</dbReference>
<dbReference type="NCBIfam" id="NF011859">
    <property type="entry name" value="PRK15331.1"/>
    <property type="match status" value="1"/>
</dbReference>
<dbReference type="Pfam" id="PF07720">
    <property type="entry name" value="TPR_3"/>
    <property type="match status" value="2"/>
</dbReference>
<dbReference type="PIRSF" id="PIRSF003165">
    <property type="entry name" value="Chaperone_SicA"/>
    <property type="match status" value="1"/>
</dbReference>
<dbReference type="PRINTS" id="PR01595">
    <property type="entry name" value="SYCDCHAPRONE"/>
</dbReference>
<dbReference type="SUPFAM" id="SSF48452">
    <property type="entry name" value="TPR-like"/>
    <property type="match status" value="1"/>
</dbReference>
<keyword id="KW-0002">3D-structure</keyword>
<keyword id="KW-0143">Chaperone</keyword>
<keyword id="KW-0963">Cytoplasm</keyword>
<keyword id="KW-0614">Plasmid</keyword>
<keyword id="KW-1185">Reference proteome</keyword>
<keyword id="KW-0843">Virulence</keyword>
<reference key="1">
    <citation type="journal article" date="1988" name="Microb. Pathog.">
        <title>Nucleotide sequence of the invasion plasmid antigen B and C genes (ipaB and ipaC) of Shigella flexneri.</title>
        <authorList>
            <person name="Baudry B."/>
            <person name="Kaczorek M."/>
            <person name="Sansonetti P.J."/>
        </authorList>
    </citation>
    <scope>NUCLEOTIDE SEQUENCE [GENOMIC DNA]</scope>
    <source>
        <strain>M90T / Serotype 5a</strain>
        <plasmid>pWR100</plasmid>
    </source>
</reference>
<reference key="2">
    <citation type="journal article" date="1988" name="Proc. Natl. Acad. Sci. U.S.A.">
        <title>Characterization of invasion plasmid antigen genes (ipaBCD) from Shigella flexneri.</title>
        <authorList>
            <person name="Venkatesan M.M."/>
            <person name="Buysse J.M."/>
            <person name="Kopecko D.J."/>
        </authorList>
    </citation>
    <scope>NUCLEOTIDE SEQUENCE [GENOMIC DNA]</scope>
    <source>
        <strain>M90T / Serotype 5a</strain>
        <plasmid>pWR100</plasmid>
    </source>
</reference>
<reference key="3">
    <citation type="journal article" date="1989" name="Mol. Microbiol.">
        <title>Functional organization and nucleotide sequence of virulence region-2 on the large virulence plasmid in Shigella flexneri 2a.</title>
        <authorList>
            <person name="Sasakawa C."/>
            <person name="Adler B."/>
            <person name="Tobe T."/>
            <person name="Okada N."/>
            <person name="Nagai S."/>
            <person name="Komatsu K."/>
            <person name="Yoshikawa M."/>
        </authorList>
    </citation>
    <scope>NUCLEOTIDE SEQUENCE [GENOMIC DNA]</scope>
    <source>
        <strain>YSH6000 / Serotype 2a</strain>
        <plasmid>pMYSH6000</plasmid>
    </source>
</reference>
<reference key="4">
    <citation type="journal article" date="2000" name="Mol. Microbiol.">
        <title>The virulence plasmid pWR100 and the repertoire of proteins secreted by the type III secretion apparatus of Shigella flexneri.</title>
        <authorList>
            <person name="Buchrieser C."/>
            <person name="Glaser P."/>
            <person name="Rusniok C."/>
            <person name="Nedjari H."/>
            <person name="d'Hauteville H."/>
            <person name="Kunst F."/>
            <person name="Sansonetti P.J."/>
            <person name="Parsot C."/>
        </authorList>
    </citation>
    <scope>NUCLEOTIDE SEQUENCE [GENOMIC DNA]</scope>
    <source>
        <strain>M90T / Serotype 5a</strain>
        <plasmid>pWR100</plasmid>
    </source>
</reference>
<reference key="5">
    <citation type="journal article" date="2001" name="Infect. Immun.">
        <title>Complete DNA sequence and analysis of the large virulence plasmid of Shigella flexneri.</title>
        <authorList>
            <person name="Venkatesan M.M."/>
            <person name="Goldberg M.B."/>
            <person name="Rose D.J."/>
            <person name="Grotbeck E.J."/>
            <person name="Burland V."/>
            <person name="Blattner F.R."/>
        </authorList>
    </citation>
    <scope>NUCLEOTIDE SEQUENCE [GENOMIC DNA]</scope>
    <source>
        <strain>M90T / Serotype 5a</strain>
        <plasmid>pWR501</plasmid>
    </source>
</reference>
<reference key="6">
    <citation type="journal article" date="2003" name="Infect. Immun.">
        <title>Comparison of two major forms of the Shigella virulence plasmid pINV: positive selection is a major force driving the divergence.</title>
        <authorList>
            <person name="Lan R."/>
            <person name="Stevenson G."/>
            <person name="Reeves P.R."/>
        </authorList>
    </citation>
    <scope>NUCLEOTIDE SEQUENCE [GENOMIC DNA]</scope>
    <source>
        <strain>M1382 / Serotype 6</strain>
        <plasmid>pINV_F6_M1382</plasmid>
    </source>
</reference>
<reference key="7">
    <citation type="journal article" date="2002" name="Nucleic Acids Res.">
        <title>Genome sequence of Shigella flexneri 2a: insights into pathogenicity through comparison with genomes of Escherichia coli K12 and O157.</title>
        <authorList>
            <person name="Jin Q."/>
            <person name="Yuan Z."/>
            <person name="Xu J."/>
            <person name="Wang Y."/>
            <person name="Shen Y."/>
            <person name="Lu W."/>
            <person name="Wang J."/>
            <person name="Liu H."/>
            <person name="Yang J."/>
            <person name="Yang F."/>
            <person name="Zhang X."/>
            <person name="Zhang J."/>
            <person name="Yang G."/>
            <person name="Wu H."/>
            <person name="Qu D."/>
            <person name="Dong J."/>
            <person name="Sun L."/>
            <person name="Xue Y."/>
            <person name="Zhao A."/>
            <person name="Gao Y."/>
            <person name="Zhu J."/>
            <person name="Kan B."/>
            <person name="Ding K."/>
            <person name="Chen S."/>
            <person name="Cheng H."/>
            <person name="Yao Z."/>
            <person name="He B."/>
            <person name="Chen R."/>
            <person name="Ma D."/>
            <person name="Qiang B."/>
            <person name="Wen Y."/>
            <person name="Hou Y."/>
            <person name="Yu J."/>
        </authorList>
    </citation>
    <scope>NUCLEOTIDE SEQUENCE [LARGE SCALE GENOMIC DNA]</scope>
    <source>
        <strain>301 / Serotype 2a</strain>
        <plasmid>pCP301</plasmid>
    </source>
</reference>
<reference key="8">
    <citation type="journal article" date="1994" name="Cell">
        <title>Extracellular association and cytoplasmic partitioning of the IpaB and IpaC invasins of S. flexneri.</title>
        <authorList>
            <person name="Menard R."/>
            <person name="Sansonetti P."/>
            <person name="Parsot C."/>
            <person name="Vasselon T."/>
        </authorList>
    </citation>
    <scope>FUNCTION</scope>
</reference>
<name>IPGC_SHIFL</name>
<accession>P0A2U4</accession>
<accession>P18008</accession>
<comment type="function">
    <text evidence="1">Assists the correct folding of nascent IpaB. Once it is bound to IpaB, it binds to IpaC and impedes their premature association that would lead to their degradation in the absence of IpcG.</text>
</comment>
<comment type="interaction">
    <interactant intactId="EBI-1535618">
        <id>P0A2U4</id>
    </interactant>
    <interactant intactId="EBI-1535618">
        <id>P0A2U4</id>
        <label>ipgC</label>
    </interactant>
    <organismsDiffer>false</organismsDiffer>
    <experiments>3</experiments>
</comment>
<comment type="interaction">
    <interactant intactId="EBI-1535618">
        <id>P0A2U4</id>
    </interactant>
    <interactant intactId="EBI-490239">
        <id>P18011</id>
        <label>sctE</label>
    </interactant>
    <organismsDiffer>false</organismsDiffer>
    <experiments>4</experiments>
</comment>
<comment type="subcellular location">
    <subcellularLocation>
        <location>Cytoplasm</location>
    </subcellularLocation>
</comment>
<comment type="similarity">
    <text evidence="2">Belongs to the LcrH/SycD chaperone family.</text>
</comment>
<organism>
    <name type="scientific">Shigella flexneri</name>
    <dbReference type="NCBI Taxonomy" id="623"/>
    <lineage>
        <taxon>Bacteria</taxon>
        <taxon>Pseudomonadati</taxon>
        <taxon>Pseudomonadota</taxon>
        <taxon>Gammaproteobacteria</taxon>
        <taxon>Enterobacterales</taxon>
        <taxon>Enterobacteriaceae</taxon>
        <taxon>Shigella</taxon>
    </lineage>
</organism>
<protein>
    <recommendedName>
        <fullName>Chaperone protein IpgC</fullName>
    </recommendedName>
</protein>
<evidence type="ECO:0000269" key="1">
    <source>
    </source>
</evidence>
<evidence type="ECO:0000305" key="2"/>
<evidence type="ECO:0007829" key="3">
    <source>
        <dbReference type="PDB" id="7P42"/>
    </source>
</evidence>
<proteinExistence type="evidence at protein level"/>
<feature type="chain" id="PRO_0000206484" description="Chaperone protein IpgC">
    <location>
        <begin position="1"/>
        <end position="155"/>
    </location>
</feature>
<feature type="helix" evidence="3">
    <location>
        <begin position="10"/>
        <end position="15"/>
    </location>
</feature>
<feature type="helix" evidence="3">
    <location>
        <begin position="17"/>
        <end position="21"/>
    </location>
</feature>
<feature type="turn" evidence="3">
    <location>
        <begin position="25"/>
        <end position="29"/>
    </location>
</feature>
<feature type="helix" evidence="3">
    <location>
        <begin position="33"/>
        <end position="48"/>
    </location>
</feature>
<feature type="helix" evidence="3">
    <location>
        <begin position="52"/>
        <end position="65"/>
    </location>
</feature>
<feature type="helix" evidence="3">
    <location>
        <begin position="70"/>
        <end position="82"/>
    </location>
</feature>
<feature type="helix" evidence="3">
    <location>
        <begin position="86"/>
        <end position="100"/>
    </location>
</feature>
<feature type="helix" evidence="3">
    <location>
        <begin position="105"/>
        <end position="116"/>
    </location>
</feature>
<feature type="helix" evidence="3">
    <location>
        <begin position="120"/>
        <end position="133"/>
    </location>
</feature>
<feature type="helix" evidence="3">
    <location>
        <begin position="137"/>
        <end position="149"/>
    </location>
</feature>
<geneLocation type="plasmid">
    <name>pWR100</name>
</geneLocation>
<geneLocation type="plasmid">
    <name>pWR501</name>
</geneLocation>
<geneLocation type="plasmid">
    <name>pMYSH6000</name>
</geneLocation>
<geneLocation type="plasmid">
    <name>pINV_F6_M1382</name>
</geneLocation>
<geneLocation type="plasmid">
    <name>pCP301</name>
</geneLocation>
<sequence length="155" mass="17756">MSLNITENESISTAVIDAINSGATLKDINAIPDDMMDDIYSYAYDFYNKGRIEEAEVFFRFLCIYDFYNVDYIMGLAAIYQIKEQFQQAADLYAVAFALGKNDYTPVFHTGQCQLRLKAPLKAKECFELVIQHSNDEKLKIKAQSYLDAIQDIKE</sequence>
<gene>
    <name type="primary">ipgC</name>
    <name type="synonym">ippI</name>
    <name type="ordered locus">CP0129</name>
</gene>